<accession>F4I0K9</accession>
<accession>Q9C979</accession>
<accession>Q9LQA0</accession>
<comment type="function">
    <text>Putative methylesterase.</text>
</comment>
<comment type="subcellular location">
    <subcellularLocation>
        <location evidence="6">Plastid</location>
        <location evidence="6">Chloroplast</location>
    </subcellularLocation>
</comment>
<comment type="similarity">
    <text evidence="6">Belongs to the AB hydrolase superfamily. Methylesterase family.</text>
</comment>
<comment type="sequence caution" evidence="6">
    <conflict type="erroneous gene model prediction">
        <sequence resource="EMBL-CDS" id="AAF27064"/>
    </conflict>
</comment>
<comment type="sequence caution" evidence="6">
    <conflict type="erroneous gene model prediction">
        <sequence resource="EMBL-CDS" id="AAG52490"/>
    </conflict>
</comment>
<comment type="sequence caution" evidence="6">
    <conflict type="miscellaneous discrepancy">
        <sequence resource="EMBL" id="BX816117"/>
    </conflict>
    <text>Sequencing errors.</text>
</comment>
<comment type="sequence caution" evidence="6">
    <conflict type="miscellaneous discrepancy">
        <sequence resource="EMBL" id="BX816402"/>
    </conflict>
    <text>Sequencing errors.</text>
</comment>
<organism>
    <name type="scientific">Arabidopsis thaliana</name>
    <name type="common">Mouse-ear cress</name>
    <dbReference type="NCBI Taxonomy" id="3702"/>
    <lineage>
        <taxon>Eukaryota</taxon>
        <taxon>Viridiplantae</taxon>
        <taxon>Streptophyta</taxon>
        <taxon>Embryophyta</taxon>
        <taxon>Tracheophyta</taxon>
        <taxon>Spermatophyta</taxon>
        <taxon>Magnoliopsida</taxon>
        <taxon>eudicotyledons</taxon>
        <taxon>Gunneridae</taxon>
        <taxon>Pentapetalae</taxon>
        <taxon>rosids</taxon>
        <taxon>malvids</taxon>
        <taxon>Brassicales</taxon>
        <taxon>Brassicaceae</taxon>
        <taxon>Camelineae</taxon>
        <taxon>Arabidopsis</taxon>
    </lineage>
</organism>
<name>MES15_ARATH</name>
<proteinExistence type="evidence at transcript level"/>
<feature type="transit peptide" description="Chloroplast" evidence="3">
    <location>
        <begin position="1"/>
        <end position="58"/>
    </location>
</feature>
<feature type="chain" id="PRO_0000418188" description="Putative methylesterase 15, chloroplastic">
    <location>
        <begin position="59"/>
        <end position="444"/>
    </location>
</feature>
<feature type="domain" description="AB hydrolase-1" evidence="3">
    <location>
        <begin position="188"/>
        <end position="312"/>
    </location>
</feature>
<feature type="region of interest" description="Disordered" evidence="4">
    <location>
        <begin position="1"/>
        <end position="36"/>
    </location>
</feature>
<feature type="region of interest" description="Disordered" evidence="4">
    <location>
        <begin position="48"/>
        <end position="91"/>
    </location>
</feature>
<feature type="compositionally biased region" description="Polar residues" evidence="4">
    <location>
        <begin position="1"/>
        <end position="27"/>
    </location>
</feature>
<feature type="compositionally biased region" description="Low complexity" evidence="4">
    <location>
        <begin position="53"/>
        <end position="63"/>
    </location>
</feature>
<feature type="compositionally biased region" description="Basic residues" evidence="4">
    <location>
        <begin position="64"/>
        <end position="80"/>
    </location>
</feature>
<feature type="compositionally biased region" description="Basic and acidic residues" evidence="4">
    <location>
        <begin position="81"/>
        <end position="90"/>
    </location>
</feature>
<feature type="active site" description="Acyl-ester intermediate" evidence="1">
    <location>
        <position position="262"/>
    </location>
</feature>
<feature type="active site" description="Charge relay system" evidence="1">
    <location>
        <position position="390"/>
    </location>
</feature>
<feature type="active site" description="Charge relay system" evidence="1">
    <location>
        <position position="418"/>
    </location>
</feature>
<evidence type="ECO:0000250" key="1">
    <source>
        <dbReference type="UniProtKB" id="Q6RYA0"/>
    </source>
</evidence>
<evidence type="ECO:0000250" key="2">
    <source>
        <dbReference type="UniProtKB" id="Q9SG92"/>
    </source>
</evidence>
<evidence type="ECO:0000255" key="3"/>
<evidence type="ECO:0000256" key="4">
    <source>
        <dbReference type="SAM" id="MobiDB-lite"/>
    </source>
</evidence>
<evidence type="ECO:0000303" key="5">
    <source>
    </source>
</evidence>
<evidence type="ECO:0000305" key="6"/>
<evidence type="ECO:0000312" key="7">
    <source>
        <dbReference type="Araport" id="AT1G69240"/>
    </source>
</evidence>
<evidence type="ECO:0000312" key="8">
    <source>
        <dbReference type="EMBL" id="AAF27064.1"/>
    </source>
</evidence>
<evidence type="ECO:0000312" key="9">
    <source>
        <dbReference type="EMBL" id="AAG52490.1"/>
    </source>
</evidence>
<reference key="1">
    <citation type="journal article" date="2000" name="Nature">
        <title>Sequence and analysis of chromosome 1 of the plant Arabidopsis thaliana.</title>
        <authorList>
            <person name="Theologis A."/>
            <person name="Ecker J.R."/>
            <person name="Palm C.J."/>
            <person name="Federspiel N.A."/>
            <person name="Kaul S."/>
            <person name="White O."/>
            <person name="Alonso J."/>
            <person name="Altafi H."/>
            <person name="Araujo R."/>
            <person name="Bowman C.L."/>
            <person name="Brooks S.Y."/>
            <person name="Buehler E."/>
            <person name="Chan A."/>
            <person name="Chao Q."/>
            <person name="Chen H."/>
            <person name="Cheuk R.F."/>
            <person name="Chin C.W."/>
            <person name="Chung M.K."/>
            <person name="Conn L."/>
            <person name="Conway A.B."/>
            <person name="Conway A.R."/>
            <person name="Creasy T.H."/>
            <person name="Dewar K."/>
            <person name="Dunn P."/>
            <person name="Etgu P."/>
            <person name="Feldblyum T.V."/>
            <person name="Feng J.-D."/>
            <person name="Fong B."/>
            <person name="Fujii C.Y."/>
            <person name="Gill J.E."/>
            <person name="Goldsmith A.D."/>
            <person name="Haas B."/>
            <person name="Hansen N.F."/>
            <person name="Hughes B."/>
            <person name="Huizar L."/>
            <person name="Hunter J.L."/>
            <person name="Jenkins J."/>
            <person name="Johnson-Hopson C."/>
            <person name="Khan S."/>
            <person name="Khaykin E."/>
            <person name="Kim C.J."/>
            <person name="Koo H.L."/>
            <person name="Kremenetskaia I."/>
            <person name="Kurtz D.B."/>
            <person name="Kwan A."/>
            <person name="Lam B."/>
            <person name="Langin-Hooper S."/>
            <person name="Lee A."/>
            <person name="Lee J.M."/>
            <person name="Lenz C.A."/>
            <person name="Li J.H."/>
            <person name="Li Y.-P."/>
            <person name="Lin X."/>
            <person name="Liu S.X."/>
            <person name="Liu Z.A."/>
            <person name="Luros J.S."/>
            <person name="Maiti R."/>
            <person name="Marziali A."/>
            <person name="Militscher J."/>
            <person name="Miranda M."/>
            <person name="Nguyen M."/>
            <person name="Nierman W.C."/>
            <person name="Osborne B.I."/>
            <person name="Pai G."/>
            <person name="Peterson J."/>
            <person name="Pham P.K."/>
            <person name="Rizzo M."/>
            <person name="Rooney T."/>
            <person name="Rowley D."/>
            <person name="Sakano H."/>
            <person name="Salzberg S.L."/>
            <person name="Schwartz J.R."/>
            <person name="Shinn P."/>
            <person name="Southwick A.M."/>
            <person name="Sun H."/>
            <person name="Tallon L.J."/>
            <person name="Tambunga G."/>
            <person name="Toriumi M.J."/>
            <person name="Town C.D."/>
            <person name="Utterback T."/>
            <person name="Van Aken S."/>
            <person name="Vaysberg M."/>
            <person name="Vysotskaia V.S."/>
            <person name="Walker M."/>
            <person name="Wu D."/>
            <person name="Yu G."/>
            <person name="Fraser C.M."/>
            <person name="Venter J.C."/>
            <person name="Davis R.W."/>
        </authorList>
    </citation>
    <scope>NUCLEOTIDE SEQUENCE [LARGE SCALE GENOMIC DNA]</scope>
    <source>
        <strain>cv. Columbia</strain>
    </source>
</reference>
<reference key="2">
    <citation type="journal article" date="2017" name="Plant J.">
        <title>Araport11: a complete reannotation of the Arabidopsis thaliana reference genome.</title>
        <authorList>
            <person name="Cheng C.Y."/>
            <person name="Krishnakumar V."/>
            <person name="Chan A.P."/>
            <person name="Thibaud-Nissen F."/>
            <person name="Schobel S."/>
            <person name="Town C.D."/>
        </authorList>
    </citation>
    <scope>GENOME REANNOTATION</scope>
    <source>
        <strain>cv. Columbia</strain>
    </source>
</reference>
<reference key="3">
    <citation type="journal article" date="2004" name="Genome Res.">
        <title>Whole genome sequence comparisons and 'full-length' cDNA sequences: a combined approach to evaluate and improve Arabidopsis genome annotation.</title>
        <authorList>
            <person name="Castelli V."/>
            <person name="Aury J.-M."/>
            <person name="Jaillon O."/>
            <person name="Wincker P."/>
            <person name="Clepet C."/>
            <person name="Menard M."/>
            <person name="Cruaud C."/>
            <person name="Quetier F."/>
            <person name="Scarpelli C."/>
            <person name="Schaechter V."/>
            <person name="Temple G."/>
            <person name="Caboche M."/>
            <person name="Weissenbach J."/>
            <person name="Salanoubat M."/>
        </authorList>
    </citation>
    <scope>NUCLEOTIDE SEQUENCE [LARGE SCALE MRNA]</scope>
    <source>
        <strain>cv. Columbia</strain>
    </source>
</reference>
<reference key="4">
    <citation type="journal article" date="2008" name="Plant Physiol.">
        <title>Inactive methyl indole-3-acetic acid ester can be hydrolyzed and activated by several esterases belonging to the AtMES esterase family of Arabidopsis.</title>
        <authorList>
            <person name="Yang Y."/>
            <person name="Xu R."/>
            <person name="Ma C.J."/>
            <person name="Vlot A.C."/>
            <person name="Klessig D.F."/>
            <person name="Pichersky E."/>
        </authorList>
    </citation>
    <scope>GENE FAMILY</scope>
</reference>
<dbReference type="EC" id="3.1.1.-" evidence="2"/>
<dbReference type="EMBL" id="AC008262">
    <property type="protein sequence ID" value="AAF27064.1"/>
    <property type="status" value="ALT_SEQ"/>
    <property type="molecule type" value="Genomic_DNA"/>
</dbReference>
<dbReference type="EMBL" id="AC018364">
    <property type="protein sequence ID" value="AAG52490.1"/>
    <property type="status" value="ALT_SEQ"/>
    <property type="molecule type" value="Genomic_DNA"/>
</dbReference>
<dbReference type="EMBL" id="CP002684">
    <property type="protein sequence ID" value="AEE34900.1"/>
    <property type="molecule type" value="Genomic_DNA"/>
</dbReference>
<dbReference type="EMBL" id="BX816117">
    <property type="status" value="NOT_ANNOTATED_CDS"/>
    <property type="molecule type" value="mRNA"/>
</dbReference>
<dbReference type="EMBL" id="BX816402">
    <property type="status" value="NOT_ANNOTATED_CDS"/>
    <property type="molecule type" value="mRNA"/>
</dbReference>
<dbReference type="PIR" id="D96716">
    <property type="entry name" value="D96716"/>
</dbReference>
<dbReference type="RefSeq" id="NP_177084.2">
    <property type="nucleotide sequence ID" value="NM_105591.3"/>
</dbReference>
<dbReference type="SMR" id="F4I0K9"/>
<dbReference type="STRING" id="3702.F4I0K9"/>
<dbReference type="ESTHER" id="arath-MES15">
    <property type="family name" value="Hydroxynitrile_lyase"/>
</dbReference>
<dbReference type="MEROPS" id="S33.A69"/>
<dbReference type="iPTMnet" id="F4I0K9"/>
<dbReference type="PaxDb" id="3702-AT1G69240.1"/>
<dbReference type="ProteomicsDB" id="250645"/>
<dbReference type="EnsemblPlants" id="AT1G69240.1">
    <property type="protein sequence ID" value="AT1G69240.1"/>
    <property type="gene ID" value="AT1G69240"/>
</dbReference>
<dbReference type="GeneID" id="843255"/>
<dbReference type="Gramene" id="AT1G69240.1">
    <property type="protein sequence ID" value="AT1G69240.1"/>
    <property type="gene ID" value="AT1G69240"/>
</dbReference>
<dbReference type="KEGG" id="ath:AT1G69240"/>
<dbReference type="Araport" id="AT1G69240"/>
<dbReference type="TAIR" id="AT1G69240">
    <property type="gene designation" value="MES15"/>
</dbReference>
<dbReference type="eggNOG" id="ENOG502S15T">
    <property type="taxonomic scope" value="Eukaryota"/>
</dbReference>
<dbReference type="HOGENOM" id="CLU_046066_8_1_1"/>
<dbReference type="InParanoid" id="F4I0K9"/>
<dbReference type="OMA" id="NYDLMEQ"/>
<dbReference type="PRO" id="PR:F4I0K9"/>
<dbReference type="Proteomes" id="UP000006548">
    <property type="component" value="Chromosome 1"/>
</dbReference>
<dbReference type="ExpressionAtlas" id="F4I0K9">
    <property type="expression patterns" value="baseline and differential"/>
</dbReference>
<dbReference type="GO" id="GO:0009507">
    <property type="term" value="C:chloroplast"/>
    <property type="evidence" value="ECO:0007669"/>
    <property type="project" value="UniProtKB-SubCell"/>
</dbReference>
<dbReference type="GO" id="GO:0016787">
    <property type="term" value="F:hydrolase activity"/>
    <property type="evidence" value="ECO:0007669"/>
    <property type="project" value="UniProtKB-KW"/>
</dbReference>
<dbReference type="FunFam" id="3.40.50.1820:FF:000025">
    <property type="entry name" value="putative methylesterase 11, chloroplastic"/>
    <property type="match status" value="1"/>
</dbReference>
<dbReference type="Gene3D" id="3.40.50.1820">
    <property type="entry name" value="alpha/beta hydrolase"/>
    <property type="match status" value="1"/>
</dbReference>
<dbReference type="InterPro" id="IPR000073">
    <property type="entry name" value="AB_hydrolase_1"/>
</dbReference>
<dbReference type="InterPro" id="IPR029058">
    <property type="entry name" value="AB_hydrolase_fold"/>
</dbReference>
<dbReference type="InterPro" id="IPR045889">
    <property type="entry name" value="MES/HNL"/>
</dbReference>
<dbReference type="PANTHER" id="PTHR10992:SF1025">
    <property type="entry name" value="METHYLESTERASE 15, CHLOROPLASTIC-RELATED"/>
    <property type="match status" value="1"/>
</dbReference>
<dbReference type="PANTHER" id="PTHR10992">
    <property type="entry name" value="METHYLESTERASE FAMILY MEMBER"/>
    <property type="match status" value="1"/>
</dbReference>
<dbReference type="Pfam" id="PF12697">
    <property type="entry name" value="Abhydrolase_6"/>
    <property type="match status" value="1"/>
</dbReference>
<dbReference type="SUPFAM" id="SSF53474">
    <property type="entry name" value="alpha/beta-Hydrolases"/>
    <property type="match status" value="1"/>
</dbReference>
<sequence length="444" mass="49329">MGNSLRCISQEQDPNQKKPSSVVNGNSSEKHVRRLSLIPSFRRRTLLPSLSCSGSSTSSTSKKGGIKTKKKIRERHHQEQHHHDHEKDSLIQDQTLAATNILFSQTPRNSNSAPPFRRSTSVVYTQPPTAAVAASVGSVSGALTPKKSTYGYVRSSSNRQRSSTDPVLKPNQLLDKELKVEGAETKRFVLVHGGGFGAWCWYKTITLLEKHGFQVDAVDLTGSGVSSFDTNNITSLAQYVKPLLHFFDTLKPTEKVILVGHDFGGACMSYAMEMYPSKIAKAIFISAAMLANAQSTLDLFNQQPDSNYDLMEQVHLFLYANGKKNPPTAVDFDRSLLRDFFFNQSPPKDVALASVSMRPIPFAPVVEKLHVSEKNYGSIRRFYIKTMEDDYAVPVSLQDAMIKSNPPEQVFHLKGSDHAPFFSRPQSLNRILVEISQLPPKKSS</sequence>
<gene>
    <name evidence="5" type="primary">MES15</name>
    <name type="synonym">RHS9</name>
    <name evidence="7" type="ordered locus">At1g69240</name>
    <name evidence="9" type="ORF">F23O10.18</name>
    <name evidence="8" type="ORF">F4N2.19</name>
</gene>
<keyword id="KW-0150">Chloroplast</keyword>
<keyword id="KW-0378">Hydrolase</keyword>
<keyword id="KW-0934">Plastid</keyword>
<keyword id="KW-1185">Reference proteome</keyword>
<keyword id="KW-0809">Transit peptide</keyword>
<protein>
    <recommendedName>
        <fullName evidence="5">Putative methylesterase 15, chloroplastic</fullName>
        <shortName evidence="5">AtMES15</shortName>
        <ecNumber evidence="2">3.1.1.-</ecNumber>
    </recommendedName>
    <alternativeName>
        <fullName>Protein ROOT HAIR SPECIFIC 9</fullName>
    </alternativeName>
</protein>